<feature type="chain" id="PRO_0000112666" description="Acetylglutamate kinase">
    <location>
        <begin position="1"/>
        <end position="254"/>
    </location>
</feature>
<feature type="binding site" evidence="1">
    <location>
        <begin position="40"/>
        <end position="41"/>
    </location>
    <ligand>
        <name>substrate</name>
    </ligand>
</feature>
<feature type="binding site" evidence="1">
    <location>
        <position position="62"/>
    </location>
    <ligand>
        <name>substrate</name>
    </ligand>
</feature>
<feature type="binding site" evidence="1">
    <location>
        <position position="154"/>
    </location>
    <ligand>
        <name>substrate</name>
    </ligand>
</feature>
<feature type="site" description="Transition state stabilizer" evidence="1">
    <location>
        <position position="7"/>
    </location>
</feature>
<feature type="site" description="Transition state stabilizer" evidence="1">
    <location>
        <position position="212"/>
    </location>
</feature>
<keyword id="KW-0028">Amino-acid biosynthesis</keyword>
<keyword id="KW-0055">Arginine biosynthesis</keyword>
<keyword id="KW-0067">ATP-binding</keyword>
<keyword id="KW-0963">Cytoplasm</keyword>
<keyword id="KW-0418">Kinase</keyword>
<keyword id="KW-0547">Nucleotide-binding</keyword>
<keyword id="KW-0808">Transferase</keyword>
<accession>Q6GCU4</accession>
<organism>
    <name type="scientific">Staphylococcus aureus (strain MSSA476)</name>
    <dbReference type="NCBI Taxonomy" id="282459"/>
    <lineage>
        <taxon>Bacteria</taxon>
        <taxon>Bacillati</taxon>
        <taxon>Bacillota</taxon>
        <taxon>Bacilli</taxon>
        <taxon>Bacillales</taxon>
        <taxon>Staphylococcaceae</taxon>
        <taxon>Staphylococcus</taxon>
    </lineage>
</organism>
<protein>
    <recommendedName>
        <fullName evidence="1">Acetylglutamate kinase</fullName>
        <ecNumber evidence="1">2.7.2.8</ecNumber>
    </recommendedName>
    <alternativeName>
        <fullName evidence="1">N-acetyl-L-glutamate 5-phosphotransferase</fullName>
    </alternativeName>
    <alternativeName>
        <fullName evidence="1">NAG kinase</fullName>
        <shortName evidence="1">NAGK</shortName>
    </alternativeName>
</protein>
<reference key="1">
    <citation type="journal article" date="2004" name="Proc. Natl. Acad. Sci. U.S.A.">
        <title>Complete genomes of two clinical Staphylococcus aureus strains: evidence for the rapid evolution of virulence and drug resistance.</title>
        <authorList>
            <person name="Holden M.T.G."/>
            <person name="Feil E.J."/>
            <person name="Lindsay J.A."/>
            <person name="Peacock S.J."/>
            <person name="Day N.P.J."/>
            <person name="Enright M.C."/>
            <person name="Foster T.J."/>
            <person name="Moore C.E."/>
            <person name="Hurst L."/>
            <person name="Atkin R."/>
            <person name="Barron A."/>
            <person name="Bason N."/>
            <person name="Bentley S.D."/>
            <person name="Chillingworth C."/>
            <person name="Chillingworth T."/>
            <person name="Churcher C."/>
            <person name="Clark L."/>
            <person name="Corton C."/>
            <person name="Cronin A."/>
            <person name="Doggett J."/>
            <person name="Dowd L."/>
            <person name="Feltwell T."/>
            <person name="Hance Z."/>
            <person name="Harris B."/>
            <person name="Hauser H."/>
            <person name="Holroyd S."/>
            <person name="Jagels K."/>
            <person name="James K.D."/>
            <person name="Lennard N."/>
            <person name="Line A."/>
            <person name="Mayes R."/>
            <person name="Moule S."/>
            <person name="Mungall K."/>
            <person name="Ormond D."/>
            <person name="Quail M.A."/>
            <person name="Rabbinowitsch E."/>
            <person name="Rutherford K.M."/>
            <person name="Sanders M."/>
            <person name="Sharp S."/>
            <person name="Simmonds M."/>
            <person name="Stevens K."/>
            <person name="Whitehead S."/>
            <person name="Barrell B.G."/>
            <person name="Spratt B.G."/>
            <person name="Parkhill J."/>
        </authorList>
    </citation>
    <scope>NUCLEOTIDE SEQUENCE [LARGE SCALE GENOMIC DNA]</scope>
    <source>
        <strain>MSSA476</strain>
    </source>
</reference>
<dbReference type="EC" id="2.7.2.8" evidence="1"/>
<dbReference type="EMBL" id="BX571857">
    <property type="protein sequence ID" value="CAG41925.1"/>
    <property type="molecule type" value="Genomic_DNA"/>
</dbReference>
<dbReference type="RefSeq" id="WP_000668894.1">
    <property type="nucleotide sequence ID" value="NC_002953.3"/>
</dbReference>
<dbReference type="SMR" id="Q6GCU4"/>
<dbReference type="KEGG" id="sas:SAS0157"/>
<dbReference type="HOGENOM" id="CLU_053680_1_0_9"/>
<dbReference type="UniPathway" id="UPA00068">
    <property type="reaction ID" value="UER00107"/>
</dbReference>
<dbReference type="GO" id="GO:0005737">
    <property type="term" value="C:cytoplasm"/>
    <property type="evidence" value="ECO:0007669"/>
    <property type="project" value="UniProtKB-SubCell"/>
</dbReference>
<dbReference type="GO" id="GO:0003991">
    <property type="term" value="F:acetylglutamate kinase activity"/>
    <property type="evidence" value="ECO:0007669"/>
    <property type="project" value="UniProtKB-UniRule"/>
</dbReference>
<dbReference type="GO" id="GO:0005524">
    <property type="term" value="F:ATP binding"/>
    <property type="evidence" value="ECO:0007669"/>
    <property type="project" value="UniProtKB-UniRule"/>
</dbReference>
<dbReference type="GO" id="GO:0042450">
    <property type="term" value="P:arginine biosynthetic process via ornithine"/>
    <property type="evidence" value="ECO:0007669"/>
    <property type="project" value="UniProtKB-UniRule"/>
</dbReference>
<dbReference type="GO" id="GO:0006526">
    <property type="term" value="P:L-arginine biosynthetic process"/>
    <property type="evidence" value="ECO:0007669"/>
    <property type="project" value="UniProtKB-UniPathway"/>
</dbReference>
<dbReference type="CDD" id="cd04238">
    <property type="entry name" value="AAK_NAGK-like"/>
    <property type="match status" value="1"/>
</dbReference>
<dbReference type="FunFam" id="3.40.1160.10:FF:000037">
    <property type="entry name" value="Acetylglutamate kinase"/>
    <property type="match status" value="1"/>
</dbReference>
<dbReference type="Gene3D" id="3.40.1160.10">
    <property type="entry name" value="Acetylglutamate kinase-like"/>
    <property type="match status" value="1"/>
</dbReference>
<dbReference type="HAMAP" id="MF_00082">
    <property type="entry name" value="ArgB"/>
    <property type="match status" value="1"/>
</dbReference>
<dbReference type="InterPro" id="IPR036393">
    <property type="entry name" value="AceGlu_kinase-like_sf"/>
</dbReference>
<dbReference type="InterPro" id="IPR004662">
    <property type="entry name" value="AcgluKinase_fam"/>
</dbReference>
<dbReference type="InterPro" id="IPR037528">
    <property type="entry name" value="ArgB"/>
</dbReference>
<dbReference type="InterPro" id="IPR001048">
    <property type="entry name" value="Asp/Glu/Uridylate_kinase"/>
</dbReference>
<dbReference type="NCBIfam" id="TIGR00761">
    <property type="entry name" value="argB"/>
    <property type="match status" value="1"/>
</dbReference>
<dbReference type="PANTHER" id="PTHR23342">
    <property type="entry name" value="N-ACETYLGLUTAMATE SYNTHASE"/>
    <property type="match status" value="1"/>
</dbReference>
<dbReference type="PANTHER" id="PTHR23342:SF0">
    <property type="entry name" value="N-ACETYLGLUTAMATE SYNTHASE, MITOCHONDRIAL"/>
    <property type="match status" value="1"/>
</dbReference>
<dbReference type="Pfam" id="PF00696">
    <property type="entry name" value="AA_kinase"/>
    <property type="match status" value="1"/>
</dbReference>
<dbReference type="PIRSF" id="PIRSF000728">
    <property type="entry name" value="NAGK"/>
    <property type="match status" value="1"/>
</dbReference>
<dbReference type="SUPFAM" id="SSF53633">
    <property type="entry name" value="Carbamate kinase-like"/>
    <property type="match status" value="1"/>
</dbReference>
<sequence>MKFIVIKIGGSTLSDMHPSIINNIKHLRSNNIYPIIVHGGGPFINEALSNQQIEPHFVNGLRVTDKATMTITKHTLIADVNTALVAQFNQHQCSAIGLCGLDAQLFEITSFDQQYGYVGVPTALNKDALQYLCTKFVPIINSIGFNNHDGEFYNINADTLAYFIASSLKAPIYVLSNIAGVLINDVVIPQLPLVDIHQYIEHGDIYGGMIPKVLDAKNAIENGCPKVIIASGNKPNIIESIYNNDFVGTTILNS</sequence>
<evidence type="ECO:0000255" key="1">
    <source>
        <dbReference type="HAMAP-Rule" id="MF_00082"/>
    </source>
</evidence>
<comment type="function">
    <text evidence="1">Catalyzes the ATP-dependent phosphorylation of N-acetyl-L-glutamate.</text>
</comment>
<comment type="catalytic activity">
    <reaction evidence="1">
        <text>N-acetyl-L-glutamate + ATP = N-acetyl-L-glutamyl 5-phosphate + ADP</text>
        <dbReference type="Rhea" id="RHEA:14629"/>
        <dbReference type="ChEBI" id="CHEBI:30616"/>
        <dbReference type="ChEBI" id="CHEBI:44337"/>
        <dbReference type="ChEBI" id="CHEBI:57936"/>
        <dbReference type="ChEBI" id="CHEBI:456216"/>
        <dbReference type="EC" id="2.7.2.8"/>
    </reaction>
</comment>
<comment type="pathway">
    <text evidence="1">Amino-acid biosynthesis; L-arginine biosynthesis; N(2)-acetyl-L-ornithine from L-glutamate: step 2/4.</text>
</comment>
<comment type="subcellular location">
    <subcellularLocation>
        <location evidence="1">Cytoplasm</location>
    </subcellularLocation>
</comment>
<comment type="similarity">
    <text evidence="1">Belongs to the acetylglutamate kinase family. ArgB subfamily.</text>
</comment>
<name>ARGB_STAAS</name>
<proteinExistence type="inferred from homology"/>
<gene>
    <name evidence="1" type="primary">argB</name>
    <name type="ordered locus">SAS0157</name>
</gene>